<protein>
    <recommendedName>
        <fullName evidence="1">Homoserine kinase</fullName>
        <shortName evidence="1">HK</shortName>
        <shortName evidence="1">HSK</shortName>
        <ecNumber evidence="1">2.7.1.39</ecNumber>
    </recommendedName>
</protein>
<organism>
    <name type="scientific">Listeria monocytogenes serovar 1/2a (strain ATCC BAA-679 / EGD-e)</name>
    <dbReference type="NCBI Taxonomy" id="169963"/>
    <lineage>
        <taxon>Bacteria</taxon>
        <taxon>Bacillati</taxon>
        <taxon>Bacillota</taxon>
        <taxon>Bacilli</taxon>
        <taxon>Bacillales</taxon>
        <taxon>Listeriaceae</taxon>
        <taxon>Listeria</taxon>
    </lineage>
</organism>
<gene>
    <name evidence="1" type="primary">thrB</name>
    <name type="ordered locus">lmo2545</name>
</gene>
<name>KHSE_LISMO</name>
<reference key="1">
    <citation type="journal article" date="2001" name="Science">
        <title>Comparative genomics of Listeria species.</title>
        <authorList>
            <person name="Glaser P."/>
            <person name="Frangeul L."/>
            <person name="Buchrieser C."/>
            <person name="Rusniok C."/>
            <person name="Amend A."/>
            <person name="Baquero F."/>
            <person name="Berche P."/>
            <person name="Bloecker H."/>
            <person name="Brandt P."/>
            <person name="Chakraborty T."/>
            <person name="Charbit A."/>
            <person name="Chetouani F."/>
            <person name="Couve E."/>
            <person name="de Daruvar A."/>
            <person name="Dehoux P."/>
            <person name="Domann E."/>
            <person name="Dominguez-Bernal G."/>
            <person name="Duchaud E."/>
            <person name="Durant L."/>
            <person name="Dussurget O."/>
            <person name="Entian K.-D."/>
            <person name="Fsihi H."/>
            <person name="Garcia-del Portillo F."/>
            <person name="Garrido P."/>
            <person name="Gautier L."/>
            <person name="Goebel W."/>
            <person name="Gomez-Lopez N."/>
            <person name="Hain T."/>
            <person name="Hauf J."/>
            <person name="Jackson D."/>
            <person name="Jones L.-M."/>
            <person name="Kaerst U."/>
            <person name="Kreft J."/>
            <person name="Kuhn M."/>
            <person name="Kunst F."/>
            <person name="Kurapkat G."/>
            <person name="Madueno E."/>
            <person name="Maitournam A."/>
            <person name="Mata Vicente J."/>
            <person name="Ng E."/>
            <person name="Nedjari H."/>
            <person name="Nordsiek G."/>
            <person name="Novella S."/>
            <person name="de Pablos B."/>
            <person name="Perez-Diaz J.-C."/>
            <person name="Purcell R."/>
            <person name="Remmel B."/>
            <person name="Rose M."/>
            <person name="Schlueter T."/>
            <person name="Simoes N."/>
            <person name="Tierrez A."/>
            <person name="Vazquez-Boland J.-A."/>
            <person name="Voss H."/>
            <person name="Wehland J."/>
            <person name="Cossart P."/>
        </authorList>
    </citation>
    <scope>NUCLEOTIDE SEQUENCE [LARGE SCALE GENOMIC DNA]</scope>
    <source>
        <strain>ATCC BAA-679 / EGD-e</strain>
    </source>
</reference>
<dbReference type="EC" id="2.7.1.39" evidence="1"/>
<dbReference type="EMBL" id="AL591983">
    <property type="protein sequence ID" value="CAD00623.1"/>
    <property type="molecule type" value="Genomic_DNA"/>
</dbReference>
<dbReference type="PIR" id="AI1392">
    <property type="entry name" value="AI1392"/>
</dbReference>
<dbReference type="RefSeq" id="NP_466068.1">
    <property type="nucleotide sequence ID" value="NC_003210.1"/>
</dbReference>
<dbReference type="RefSeq" id="WP_010990012.1">
    <property type="nucleotide sequence ID" value="NZ_CP149495.1"/>
</dbReference>
<dbReference type="PDB" id="3HUL">
    <property type="method" value="X-ray"/>
    <property type="resolution" value="2.19 A"/>
    <property type="chains" value="A/B=2-288"/>
</dbReference>
<dbReference type="PDBsum" id="3HUL"/>
<dbReference type="SMR" id="Q8Y4A6"/>
<dbReference type="STRING" id="169963.gene:17595256"/>
<dbReference type="PaxDb" id="169963-lmo2545"/>
<dbReference type="DNASU" id="984754"/>
<dbReference type="EnsemblBacteria" id="CAD00623">
    <property type="protein sequence ID" value="CAD00623"/>
    <property type="gene ID" value="CAD00623"/>
</dbReference>
<dbReference type="GeneID" id="984754"/>
<dbReference type="KEGG" id="lmo:lmo2545"/>
<dbReference type="PATRIC" id="fig|169963.11.peg.2607"/>
<dbReference type="eggNOG" id="COG0083">
    <property type="taxonomic scope" value="Bacteria"/>
</dbReference>
<dbReference type="HOGENOM" id="CLU_041243_0_0_9"/>
<dbReference type="OrthoDB" id="9769912at2"/>
<dbReference type="PhylomeDB" id="Q8Y4A6"/>
<dbReference type="BioCyc" id="LMON169963:LMO2545-MONOMER"/>
<dbReference type="UniPathway" id="UPA00050">
    <property type="reaction ID" value="UER00064"/>
</dbReference>
<dbReference type="EvolutionaryTrace" id="Q8Y4A6"/>
<dbReference type="Proteomes" id="UP000000817">
    <property type="component" value="Chromosome"/>
</dbReference>
<dbReference type="GO" id="GO:0005737">
    <property type="term" value="C:cytoplasm"/>
    <property type="evidence" value="ECO:0007669"/>
    <property type="project" value="UniProtKB-SubCell"/>
</dbReference>
<dbReference type="GO" id="GO:0005524">
    <property type="term" value="F:ATP binding"/>
    <property type="evidence" value="ECO:0007669"/>
    <property type="project" value="UniProtKB-UniRule"/>
</dbReference>
<dbReference type="GO" id="GO:0004413">
    <property type="term" value="F:homoserine kinase activity"/>
    <property type="evidence" value="ECO:0007669"/>
    <property type="project" value="UniProtKB-UniRule"/>
</dbReference>
<dbReference type="GO" id="GO:0009088">
    <property type="term" value="P:threonine biosynthetic process"/>
    <property type="evidence" value="ECO:0007669"/>
    <property type="project" value="UniProtKB-UniRule"/>
</dbReference>
<dbReference type="Gene3D" id="3.30.230.10">
    <property type="match status" value="1"/>
</dbReference>
<dbReference type="Gene3D" id="3.30.70.890">
    <property type="entry name" value="GHMP kinase, C-terminal domain"/>
    <property type="match status" value="1"/>
</dbReference>
<dbReference type="HAMAP" id="MF_00384">
    <property type="entry name" value="Homoser_kinase"/>
    <property type="match status" value="1"/>
</dbReference>
<dbReference type="InterPro" id="IPR013750">
    <property type="entry name" value="GHMP_kinase_C_dom"/>
</dbReference>
<dbReference type="InterPro" id="IPR036554">
    <property type="entry name" value="GHMP_kinase_C_sf"/>
</dbReference>
<dbReference type="InterPro" id="IPR006204">
    <property type="entry name" value="GHMP_kinase_N_dom"/>
</dbReference>
<dbReference type="InterPro" id="IPR006203">
    <property type="entry name" value="GHMP_knse_ATP-bd_CS"/>
</dbReference>
<dbReference type="InterPro" id="IPR000870">
    <property type="entry name" value="Homoserine_kinase"/>
</dbReference>
<dbReference type="InterPro" id="IPR020568">
    <property type="entry name" value="Ribosomal_Su5_D2-typ_SF"/>
</dbReference>
<dbReference type="InterPro" id="IPR014721">
    <property type="entry name" value="Ribsml_uS5_D2-typ_fold_subgr"/>
</dbReference>
<dbReference type="NCBIfam" id="TIGR00191">
    <property type="entry name" value="thrB"/>
    <property type="match status" value="1"/>
</dbReference>
<dbReference type="PANTHER" id="PTHR20861:SF1">
    <property type="entry name" value="HOMOSERINE KINASE"/>
    <property type="match status" value="1"/>
</dbReference>
<dbReference type="PANTHER" id="PTHR20861">
    <property type="entry name" value="HOMOSERINE/4-DIPHOSPHOCYTIDYL-2-C-METHYL-D-ERYTHRITOL KINASE"/>
    <property type="match status" value="1"/>
</dbReference>
<dbReference type="Pfam" id="PF08544">
    <property type="entry name" value="GHMP_kinases_C"/>
    <property type="match status" value="1"/>
</dbReference>
<dbReference type="Pfam" id="PF00288">
    <property type="entry name" value="GHMP_kinases_N"/>
    <property type="match status" value="1"/>
</dbReference>
<dbReference type="PIRSF" id="PIRSF000676">
    <property type="entry name" value="Homoser_kin"/>
    <property type="match status" value="1"/>
</dbReference>
<dbReference type="PRINTS" id="PR00958">
    <property type="entry name" value="HOMSERKINASE"/>
</dbReference>
<dbReference type="SUPFAM" id="SSF55060">
    <property type="entry name" value="GHMP Kinase, C-terminal domain"/>
    <property type="match status" value="1"/>
</dbReference>
<dbReference type="SUPFAM" id="SSF54211">
    <property type="entry name" value="Ribosomal protein S5 domain 2-like"/>
    <property type="match status" value="1"/>
</dbReference>
<dbReference type="PROSITE" id="PS00627">
    <property type="entry name" value="GHMP_KINASES_ATP"/>
    <property type="match status" value="1"/>
</dbReference>
<keyword id="KW-0002">3D-structure</keyword>
<keyword id="KW-0028">Amino-acid biosynthesis</keyword>
<keyword id="KW-0067">ATP-binding</keyword>
<keyword id="KW-0963">Cytoplasm</keyword>
<keyword id="KW-0418">Kinase</keyword>
<keyword id="KW-0547">Nucleotide-binding</keyword>
<keyword id="KW-1185">Reference proteome</keyword>
<keyword id="KW-0791">Threonine biosynthesis</keyword>
<keyword id="KW-0808">Transferase</keyword>
<proteinExistence type="evidence at protein level"/>
<accession>Q8Y4A6</accession>
<feature type="chain" id="PRO_0000156584" description="Homoserine kinase">
    <location>
        <begin position="1"/>
        <end position="288"/>
    </location>
</feature>
<feature type="binding site" evidence="1">
    <location>
        <begin position="79"/>
        <end position="89"/>
    </location>
    <ligand>
        <name>ATP</name>
        <dbReference type="ChEBI" id="CHEBI:30616"/>
    </ligand>
</feature>
<feature type="strand" evidence="2">
    <location>
        <begin position="2"/>
        <end position="11"/>
    </location>
</feature>
<feature type="turn" evidence="2">
    <location>
        <begin position="16"/>
        <end position="18"/>
    </location>
</feature>
<feature type="strand" evidence="2">
    <location>
        <begin position="19"/>
        <end position="34"/>
    </location>
</feature>
<feature type="strand" evidence="2">
    <location>
        <begin position="39"/>
        <end position="41"/>
    </location>
</feature>
<feature type="helix" evidence="2">
    <location>
        <begin position="55"/>
        <end position="63"/>
    </location>
</feature>
<feature type="strand" evidence="2">
    <location>
        <begin position="70"/>
        <end position="76"/>
    </location>
</feature>
<feature type="strand" evidence="2">
    <location>
        <begin position="82"/>
        <end position="85"/>
    </location>
</feature>
<feature type="helix" evidence="2">
    <location>
        <begin position="86"/>
        <end position="101"/>
    </location>
</feature>
<feature type="helix" evidence="2">
    <location>
        <begin position="108"/>
        <end position="119"/>
    </location>
</feature>
<feature type="helix" evidence="2">
    <location>
        <begin position="125"/>
        <end position="130"/>
    </location>
</feature>
<feature type="strand" evidence="2">
    <location>
        <begin position="132"/>
        <end position="139"/>
    </location>
</feature>
<feature type="strand" evidence="2">
    <location>
        <begin position="142"/>
        <end position="148"/>
    </location>
</feature>
<feature type="strand" evidence="2">
    <location>
        <begin position="154"/>
        <end position="159"/>
    </location>
</feature>
<feature type="strand" evidence="2">
    <location>
        <begin position="176"/>
        <end position="178"/>
    </location>
</feature>
<feature type="helix" evidence="2">
    <location>
        <begin position="179"/>
        <end position="196"/>
    </location>
</feature>
<feature type="turn" evidence="2">
    <location>
        <begin position="197"/>
        <end position="199"/>
    </location>
</feature>
<feature type="helix" evidence="2">
    <location>
        <begin position="201"/>
        <end position="208"/>
    </location>
</feature>
<feature type="helix" evidence="2">
    <location>
        <begin position="222"/>
        <end position="224"/>
    </location>
</feature>
<feature type="helix" evidence="2">
    <location>
        <begin position="225"/>
        <end position="233"/>
    </location>
</feature>
<feature type="turn" evidence="2">
    <location>
        <begin position="234"/>
        <end position="236"/>
    </location>
</feature>
<feature type="strand" evidence="2">
    <location>
        <begin position="239"/>
        <end position="242"/>
    </location>
</feature>
<feature type="strand" evidence="2">
    <location>
        <begin position="249"/>
        <end position="253"/>
    </location>
</feature>
<feature type="helix" evidence="2">
    <location>
        <begin position="255"/>
        <end position="257"/>
    </location>
</feature>
<feature type="helix" evidence="2">
    <location>
        <begin position="258"/>
        <end position="266"/>
    </location>
</feature>
<feature type="strand" evidence="2">
    <location>
        <begin position="271"/>
        <end position="279"/>
    </location>
</feature>
<feature type="strand" evidence="2">
    <location>
        <begin position="285"/>
        <end position="288"/>
    </location>
</feature>
<sequence>MRIRVPATTANLGPGFDSCGLALTLYLTLDIGAEADSWYIEHNIGGGIPHDETNVIIETALNLAPNLTPHHLVMTCDIPPARGLGSSSAAVVAGIELANTLAELNLSKEEKVRIAAEIEGHPDNVAPAVLGNWVVGAKLDGEDFYVRHLFPDCALIAFIPKAELLTSESRGVLPDTLPFKEAVQASSIANVMIAAILRNDMTLAGEMMERDLWHEKYRSQLVPHLAQIRDVAKNQGAYAACLSGAGPTVLVFAPRNLANKLQTSLQTLEIDADVLLLDVEGSGAEVFR</sequence>
<evidence type="ECO:0000255" key="1">
    <source>
        <dbReference type="HAMAP-Rule" id="MF_00384"/>
    </source>
</evidence>
<evidence type="ECO:0007829" key="2">
    <source>
        <dbReference type="PDB" id="3HUL"/>
    </source>
</evidence>
<comment type="function">
    <text evidence="1">Catalyzes the ATP-dependent phosphorylation of L-homoserine to L-homoserine phosphate.</text>
</comment>
<comment type="catalytic activity">
    <reaction evidence="1">
        <text>L-homoserine + ATP = O-phospho-L-homoserine + ADP + H(+)</text>
        <dbReference type="Rhea" id="RHEA:13985"/>
        <dbReference type="ChEBI" id="CHEBI:15378"/>
        <dbReference type="ChEBI" id="CHEBI:30616"/>
        <dbReference type="ChEBI" id="CHEBI:57476"/>
        <dbReference type="ChEBI" id="CHEBI:57590"/>
        <dbReference type="ChEBI" id="CHEBI:456216"/>
        <dbReference type="EC" id="2.7.1.39"/>
    </reaction>
</comment>
<comment type="pathway">
    <text evidence="1">Amino-acid biosynthesis; L-threonine biosynthesis; L-threonine from L-aspartate: step 4/5.</text>
</comment>
<comment type="subcellular location">
    <subcellularLocation>
        <location evidence="1">Cytoplasm</location>
    </subcellularLocation>
</comment>
<comment type="similarity">
    <text evidence="1">Belongs to the GHMP kinase family. Homoserine kinase subfamily.</text>
</comment>